<protein>
    <recommendedName>
        <fullName>Uncharacterized protein MJ0664</fullName>
    </recommendedName>
</protein>
<name>Y664_METJA</name>
<dbReference type="EMBL" id="L77117">
    <property type="protein sequence ID" value="AAB98660.1"/>
    <property type="molecule type" value="Genomic_DNA"/>
</dbReference>
<dbReference type="PIR" id="H64382">
    <property type="entry name" value="H64382"/>
</dbReference>
<dbReference type="SMR" id="Q58078"/>
<dbReference type="FunCoup" id="Q58078">
    <property type="interactions" value="5"/>
</dbReference>
<dbReference type="STRING" id="243232.MJ_0664"/>
<dbReference type="PaxDb" id="243232-MJ_0664"/>
<dbReference type="EnsemblBacteria" id="AAB98660">
    <property type="protein sequence ID" value="AAB98660"/>
    <property type="gene ID" value="MJ_0664"/>
</dbReference>
<dbReference type="KEGG" id="mja:MJ_0664"/>
<dbReference type="eggNOG" id="arCOG05045">
    <property type="taxonomic scope" value="Archaea"/>
</dbReference>
<dbReference type="HOGENOM" id="CLU_920144_0_0_2"/>
<dbReference type="InParanoid" id="Q58078"/>
<dbReference type="Proteomes" id="UP000000805">
    <property type="component" value="Chromosome"/>
</dbReference>
<dbReference type="GO" id="GO:0005694">
    <property type="term" value="C:chromosome"/>
    <property type="evidence" value="ECO:0007669"/>
    <property type="project" value="InterPro"/>
</dbReference>
<dbReference type="GO" id="GO:0003677">
    <property type="term" value="F:DNA binding"/>
    <property type="evidence" value="ECO:0007669"/>
    <property type="project" value="InterPro"/>
</dbReference>
<dbReference type="GO" id="GO:0003916">
    <property type="term" value="F:DNA topoisomerase activity"/>
    <property type="evidence" value="ECO:0007669"/>
    <property type="project" value="InterPro"/>
</dbReference>
<dbReference type="GO" id="GO:0006265">
    <property type="term" value="P:DNA topological change"/>
    <property type="evidence" value="ECO:0007669"/>
    <property type="project" value="InterPro"/>
</dbReference>
<dbReference type="Gene3D" id="3.30.65.10">
    <property type="entry name" value="Bacterial Topoisomerase I, domain 1"/>
    <property type="match status" value="1"/>
</dbReference>
<dbReference type="InterPro" id="IPR013498">
    <property type="entry name" value="Topo_IA_Znf"/>
</dbReference>
<dbReference type="Pfam" id="PF01396">
    <property type="entry name" value="Zn_ribbon_Top1"/>
    <property type="match status" value="1"/>
</dbReference>
<dbReference type="SUPFAM" id="SSF57783">
    <property type="entry name" value="Zinc beta-ribbon"/>
    <property type="match status" value="1"/>
</dbReference>
<sequence>MKNLVLRRDNMGEVLNELFEILSKDLHFNATKLNSETYEQNWKVPEGFISIIGIENAKMPVFYYGITNSYKKEFEIKKVISPKGQKQIFARIYYIFDRRDIIEKEKYVVANAFNGLLLLIKFDKTEFIEKAIEMLTKGYEEDNFIKEVLNNIKEKNMFDNIDETIRFVANRDYNWLIGRIKYNMGILEYSGQGYYLIPIKTNMQITPGIKINNGRVIIDLENSHLFKNFIVYVDTINNKIIYNKERLCNKNPAILDIMSKIDDNTCPWCGAKLRVVRTKKGEFLGCTNYPNCLYRRFPKKN</sequence>
<accession>Q58078</accession>
<proteinExistence type="predicted"/>
<gene>
    <name type="ordered locus">MJ0664</name>
</gene>
<keyword id="KW-1185">Reference proteome</keyword>
<feature type="chain" id="PRO_0000106980" description="Uncharacterized protein MJ0664">
    <location>
        <begin position="1"/>
        <end position="301"/>
    </location>
</feature>
<reference key="1">
    <citation type="journal article" date="1996" name="Science">
        <title>Complete genome sequence of the methanogenic archaeon, Methanococcus jannaschii.</title>
        <authorList>
            <person name="Bult C.J."/>
            <person name="White O."/>
            <person name="Olsen G.J."/>
            <person name="Zhou L."/>
            <person name="Fleischmann R.D."/>
            <person name="Sutton G.G."/>
            <person name="Blake J.A."/>
            <person name="FitzGerald L.M."/>
            <person name="Clayton R.A."/>
            <person name="Gocayne J.D."/>
            <person name="Kerlavage A.R."/>
            <person name="Dougherty B.A."/>
            <person name="Tomb J.-F."/>
            <person name="Adams M.D."/>
            <person name="Reich C.I."/>
            <person name="Overbeek R."/>
            <person name="Kirkness E.F."/>
            <person name="Weinstock K.G."/>
            <person name="Merrick J.M."/>
            <person name="Glodek A."/>
            <person name="Scott J.L."/>
            <person name="Geoghagen N.S.M."/>
            <person name="Weidman J.F."/>
            <person name="Fuhrmann J.L."/>
            <person name="Nguyen D."/>
            <person name="Utterback T.R."/>
            <person name="Kelley J.M."/>
            <person name="Peterson J.D."/>
            <person name="Sadow P.W."/>
            <person name="Hanna M.C."/>
            <person name="Cotton M.D."/>
            <person name="Roberts K.M."/>
            <person name="Hurst M.A."/>
            <person name="Kaine B.P."/>
            <person name="Borodovsky M."/>
            <person name="Klenk H.-P."/>
            <person name="Fraser C.M."/>
            <person name="Smith H.O."/>
            <person name="Woese C.R."/>
            <person name="Venter J.C."/>
        </authorList>
    </citation>
    <scope>NUCLEOTIDE SEQUENCE [LARGE SCALE GENOMIC DNA]</scope>
    <source>
        <strain>ATCC 43067 / DSM 2661 / JAL-1 / JCM 10045 / NBRC 100440</strain>
    </source>
</reference>
<organism>
    <name type="scientific">Methanocaldococcus jannaschii (strain ATCC 43067 / DSM 2661 / JAL-1 / JCM 10045 / NBRC 100440)</name>
    <name type="common">Methanococcus jannaschii</name>
    <dbReference type="NCBI Taxonomy" id="243232"/>
    <lineage>
        <taxon>Archaea</taxon>
        <taxon>Methanobacteriati</taxon>
        <taxon>Methanobacteriota</taxon>
        <taxon>Methanomada group</taxon>
        <taxon>Methanococci</taxon>
        <taxon>Methanococcales</taxon>
        <taxon>Methanocaldococcaceae</taxon>
        <taxon>Methanocaldococcus</taxon>
    </lineage>
</organism>